<proteinExistence type="inferred from homology"/>
<sequence>MNTRATTAILVNQVVQKKCSLTALLSANKKNQSLIQELCYGTLRWYFKLKLIAEKLLHAPLRDKDHDIFCLILTGFYQLNYLNIPTHTIVNQTVGAAEILKKPWAKGLINKLLRRFIAEKDELLTFTEKTIEGQYAHPLWFIQHIKKAWPDHWESILIANNARPPMTLRVNLTKISREIYLEMLDQKNISAKPLDFLPAAIQLEKPCSVHQLPGFNEGYCYIQDAAGQFAAYLLKLENNQTVLDACAAPGSKTSHILEVNPHLKTLVAIDNNKQRLNRIKENITRLGLRQEHLQCLLADVSQIDQWSSGELFDRILLDAPCSATGVIRRHPDIKLLRQPGDISQYHQKKLQLLNALWTVLKAGGFLLYSTCSVLPDENEKVIEEFLSTHDKVELSPTNVHGGLQLKYGVQQLPGQDNKDGFYYSLLFKNP</sequence>
<gene>
    <name evidence="1" type="primary">rsmB</name>
    <name type="synonym">rrmB</name>
    <name type="synonym">sun</name>
    <name type="ordered locus">CBU_1915</name>
</gene>
<dbReference type="EC" id="2.1.1.176" evidence="1"/>
<dbReference type="EMBL" id="U10529">
    <property type="protein sequence ID" value="AAA56914.1"/>
    <property type="status" value="ALT_INIT"/>
    <property type="molecule type" value="Genomic_DNA"/>
</dbReference>
<dbReference type="EMBL" id="AE016828">
    <property type="protein sequence ID" value="AAO91406.1"/>
    <property type="molecule type" value="Genomic_DNA"/>
</dbReference>
<dbReference type="PIR" id="I40649">
    <property type="entry name" value="I40649"/>
</dbReference>
<dbReference type="RefSeq" id="NP_820892.1">
    <property type="nucleotide sequence ID" value="NC_002971.3"/>
</dbReference>
<dbReference type="RefSeq" id="WP_010958533.1">
    <property type="nucleotide sequence ID" value="NC_002971.4"/>
</dbReference>
<dbReference type="SMR" id="P45679"/>
<dbReference type="STRING" id="227377.CBU_1915"/>
<dbReference type="DNASU" id="1209828"/>
<dbReference type="EnsemblBacteria" id="AAO91406">
    <property type="protein sequence ID" value="AAO91406"/>
    <property type="gene ID" value="CBU_1915"/>
</dbReference>
<dbReference type="GeneID" id="1209828"/>
<dbReference type="KEGG" id="cbu:CBU_1915"/>
<dbReference type="PATRIC" id="fig|227377.7.peg.1899"/>
<dbReference type="eggNOG" id="COG0144">
    <property type="taxonomic scope" value="Bacteria"/>
</dbReference>
<dbReference type="HOGENOM" id="CLU_005316_0_4_6"/>
<dbReference type="OrthoDB" id="9810297at2"/>
<dbReference type="Proteomes" id="UP000002671">
    <property type="component" value="Chromosome"/>
</dbReference>
<dbReference type="GO" id="GO:0005829">
    <property type="term" value="C:cytosol"/>
    <property type="evidence" value="ECO:0000318"/>
    <property type="project" value="GO_Central"/>
</dbReference>
<dbReference type="GO" id="GO:0003723">
    <property type="term" value="F:RNA binding"/>
    <property type="evidence" value="ECO:0007669"/>
    <property type="project" value="UniProtKB-KW"/>
</dbReference>
<dbReference type="GO" id="GO:0009383">
    <property type="term" value="F:rRNA (cytosine-C5-)-methyltransferase activity"/>
    <property type="evidence" value="ECO:0000318"/>
    <property type="project" value="GO_Central"/>
</dbReference>
<dbReference type="GO" id="GO:0006355">
    <property type="term" value="P:regulation of DNA-templated transcription"/>
    <property type="evidence" value="ECO:0007669"/>
    <property type="project" value="InterPro"/>
</dbReference>
<dbReference type="GO" id="GO:0070475">
    <property type="term" value="P:rRNA base methylation"/>
    <property type="evidence" value="ECO:0000318"/>
    <property type="project" value="GO_Central"/>
</dbReference>
<dbReference type="CDD" id="cd02440">
    <property type="entry name" value="AdoMet_MTases"/>
    <property type="match status" value="1"/>
</dbReference>
<dbReference type="CDD" id="cd00620">
    <property type="entry name" value="Methyltransferase_Sun"/>
    <property type="match status" value="1"/>
</dbReference>
<dbReference type="FunFam" id="3.30.70.1170:FF:000002">
    <property type="entry name" value="Ribosomal RNA small subunit methyltransferase B"/>
    <property type="match status" value="1"/>
</dbReference>
<dbReference type="FunFam" id="3.40.50.150:FF:000022">
    <property type="entry name" value="Ribosomal RNA small subunit methyltransferase B"/>
    <property type="match status" value="1"/>
</dbReference>
<dbReference type="Gene3D" id="1.10.287.730">
    <property type="entry name" value="Helix hairpin bin"/>
    <property type="match status" value="1"/>
</dbReference>
<dbReference type="Gene3D" id="1.10.940.10">
    <property type="entry name" value="NusB-like"/>
    <property type="match status" value="1"/>
</dbReference>
<dbReference type="Gene3D" id="3.30.70.1170">
    <property type="entry name" value="Sun protein, domain 3"/>
    <property type="match status" value="1"/>
</dbReference>
<dbReference type="Gene3D" id="3.40.50.150">
    <property type="entry name" value="Vaccinia Virus protein VP39"/>
    <property type="match status" value="1"/>
</dbReference>
<dbReference type="InterPro" id="IPR049560">
    <property type="entry name" value="MeTrfase_RsmB-F_NOP2_cat"/>
</dbReference>
<dbReference type="InterPro" id="IPR001678">
    <property type="entry name" value="MeTrfase_RsmB-F_NOP2_dom"/>
</dbReference>
<dbReference type="InterPro" id="IPR035926">
    <property type="entry name" value="NusB-like_sf"/>
</dbReference>
<dbReference type="InterPro" id="IPR006027">
    <property type="entry name" value="NusB_RsmB_TIM44"/>
</dbReference>
<dbReference type="InterPro" id="IPR023267">
    <property type="entry name" value="RCMT"/>
</dbReference>
<dbReference type="InterPro" id="IPR004573">
    <property type="entry name" value="rRNA_ssu_MeTfrase_B"/>
</dbReference>
<dbReference type="InterPro" id="IPR054728">
    <property type="entry name" value="RsmB-like_ferredoxin"/>
</dbReference>
<dbReference type="InterPro" id="IPR048019">
    <property type="entry name" value="RsmB-like_N"/>
</dbReference>
<dbReference type="InterPro" id="IPR018314">
    <property type="entry name" value="RsmB/NOL1/NOP2-like_CS"/>
</dbReference>
<dbReference type="InterPro" id="IPR029063">
    <property type="entry name" value="SAM-dependent_MTases_sf"/>
</dbReference>
<dbReference type="NCBIfam" id="NF008149">
    <property type="entry name" value="PRK10901.1"/>
    <property type="match status" value="1"/>
</dbReference>
<dbReference type="NCBIfam" id="TIGR00563">
    <property type="entry name" value="rsmB"/>
    <property type="match status" value="1"/>
</dbReference>
<dbReference type="PANTHER" id="PTHR22807:SF61">
    <property type="entry name" value="NOL1_NOP2_SUN FAMILY PROTEIN _ ANTITERMINATION NUSB DOMAIN-CONTAINING PROTEIN"/>
    <property type="match status" value="1"/>
</dbReference>
<dbReference type="PANTHER" id="PTHR22807">
    <property type="entry name" value="NOP2 YEAST -RELATED NOL1/NOP2/FMU SUN DOMAIN-CONTAINING"/>
    <property type="match status" value="1"/>
</dbReference>
<dbReference type="Pfam" id="PF01189">
    <property type="entry name" value="Methyltr_RsmB-F"/>
    <property type="match status" value="1"/>
</dbReference>
<dbReference type="Pfam" id="PF01029">
    <property type="entry name" value="NusB"/>
    <property type="match status" value="1"/>
</dbReference>
<dbReference type="Pfam" id="PF22458">
    <property type="entry name" value="RsmF-B_ferredox"/>
    <property type="match status" value="1"/>
</dbReference>
<dbReference type="PRINTS" id="PR02008">
    <property type="entry name" value="RCMTFAMILY"/>
</dbReference>
<dbReference type="SUPFAM" id="SSF48013">
    <property type="entry name" value="NusB-like"/>
    <property type="match status" value="1"/>
</dbReference>
<dbReference type="SUPFAM" id="SSF53335">
    <property type="entry name" value="S-adenosyl-L-methionine-dependent methyltransferases"/>
    <property type="match status" value="1"/>
</dbReference>
<dbReference type="PROSITE" id="PS01153">
    <property type="entry name" value="NOL1_NOP2_SUN"/>
    <property type="match status" value="1"/>
</dbReference>
<dbReference type="PROSITE" id="PS51686">
    <property type="entry name" value="SAM_MT_RSMB_NOP"/>
    <property type="match status" value="1"/>
</dbReference>
<feature type="chain" id="PRO_0000211816" description="Probable ribosomal RNA small subunit methyltransferase B">
    <location>
        <begin position="1"/>
        <end position="430"/>
    </location>
</feature>
<feature type="active site" description="Nucleophile" evidence="2">
    <location>
        <position position="371"/>
    </location>
</feature>
<feature type="binding site" evidence="2">
    <location>
        <begin position="246"/>
        <end position="252"/>
    </location>
    <ligand>
        <name>S-adenosyl-L-methionine</name>
        <dbReference type="ChEBI" id="CHEBI:59789"/>
    </ligand>
</feature>
<feature type="binding site" evidence="2">
    <location>
        <position position="270"/>
    </location>
    <ligand>
        <name>S-adenosyl-L-methionine</name>
        <dbReference type="ChEBI" id="CHEBI:59789"/>
    </ligand>
</feature>
<feature type="binding site" evidence="2">
    <location>
        <position position="299"/>
    </location>
    <ligand>
        <name>S-adenosyl-L-methionine</name>
        <dbReference type="ChEBI" id="CHEBI:59789"/>
    </ligand>
</feature>
<feature type="binding site" evidence="2">
    <location>
        <position position="318"/>
    </location>
    <ligand>
        <name>S-adenosyl-L-methionine</name>
        <dbReference type="ChEBI" id="CHEBI:59789"/>
    </ligand>
</feature>
<keyword id="KW-0963">Cytoplasm</keyword>
<keyword id="KW-0489">Methyltransferase</keyword>
<keyword id="KW-1185">Reference proteome</keyword>
<keyword id="KW-0690">Ribosome biogenesis</keyword>
<keyword id="KW-0694">RNA-binding</keyword>
<keyword id="KW-0698">rRNA processing</keyword>
<keyword id="KW-0949">S-adenosyl-L-methionine</keyword>
<keyword id="KW-0808">Transferase</keyword>
<accession>P45679</accession>
<reference key="1">
    <citation type="journal article" date="1994" name="J. Bacteriol.">
        <title>Cloning and characterization of an autonomous replication sequence from Coxiella burnetii.</title>
        <authorList>
            <person name="Suhan M."/>
            <person name="Chen S.Y."/>
            <person name="Thompson H.A."/>
            <person name="Hoover T.A."/>
            <person name="Hill A."/>
            <person name="Williams J.C."/>
        </authorList>
    </citation>
    <scope>NUCLEOTIDE SEQUENCE [GENOMIC DNA]</scope>
    <source>
        <strain>Nine Mile phase I / Bratislava</strain>
    </source>
</reference>
<reference key="2">
    <citation type="journal article" date="2003" name="Proc. Natl. Acad. Sci. U.S.A.">
        <title>Complete genome sequence of the Q-fever pathogen, Coxiella burnetii.</title>
        <authorList>
            <person name="Seshadri R."/>
            <person name="Paulsen I.T."/>
            <person name="Eisen J.A."/>
            <person name="Read T.D."/>
            <person name="Nelson K.E."/>
            <person name="Nelson W.C."/>
            <person name="Ward N.L."/>
            <person name="Tettelin H."/>
            <person name="Davidsen T.M."/>
            <person name="Beanan M.J."/>
            <person name="DeBoy R.T."/>
            <person name="Daugherty S.C."/>
            <person name="Brinkac L.M."/>
            <person name="Madupu R."/>
            <person name="Dodson R.J."/>
            <person name="Khouri H.M."/>
            <person name="Lee K.H."/>
            <person name="Carty H.A."/>
            <person name="Scanlan D."/>
            <person name="Heinzen R.A."/>
            <person name="Thompson H.A."/>
            <person name="Samuel J.E."/>
            <person name="Fraser C.M."/>
            <person name="Heidelberg J.F."/>
        </authorList>
    </citation>
    <scope>NUCLEOTIDE SEQUENCE [LARGE SCALE GENOMIC DNA]</scope>
    <source>
        <strain>RSA 493 / Nine Mile phase I</strain>
    </source>
</reference>
<evidence type="ECO:0000250" key="1">
    <source>
        <dbReference type="UniProtKB" id="P36929"/>
    </source>
</evidence>
<evidence type="ECO:0000255" key="2">
    <source>
        <dbReference type="PROSITE-ProRule" id="PRU01023"/>
    </source>
</evidence>
<evidence type="ECO:0000305" key="3"/>
<comment type="function">
    <text evidence="1">Specifically methylates the cytosine at position 967 (m5C967) of 16S rRNA.</text>
</comment>
<comment type="catalytic activity">
    <reaction evidence="1">
        <text>cytidine(967) in 16S rRNA + S-adenosyl-L-methionine = 5-methylcytidine(967) in 16S rRNA + S-adenosyl-L-homocysteine + H(+)</text>
        <dbReference type="Rhea" id="RHEA:42748"/>
        <dbReference type="Rhea" id="RHEA-COMP:10219"/>
        <dbReference type="Rhea" id="RHEA-COMP:10220"/>
        <dbReference type="ChEBI" id="CHEBI:15378"/>
        <dbReference type="ChEBI" id="CHEBI:57856"/>
        <dbReference type="ChEBI" id="CHEBI:59789"/>
        <dbReference type="ChEBI" id="CHEBI:74483"/>
        <dbReference type="ChEBI" id="CHEBI:82748"/>
        <dbReference type="EC" id="2.1.1.176"/>
    </reaction>
</comment>
<comment type="subcellular location">
    <subcellularLocation>
        <location evidence="1">Cytoplasm</location>
    </subcellularLocation>
</comment>
<comment type="similarity">
    <text evidence="2">Belongs to the class I-like SAM-binding methyltransferase superfamily. RsmB/NOP family.</text>
</comment>
<comment type="sequence caution" evidence="3">
    <conflict type="erroneous initiation">
        <sequence resource="EMBL-CDS" id="AAA56914"/>
    </conflict>
</comment>
<protein>
    <recommendedName>
        <fullName evidence="3">Probable ribosomal RNA small subunit methyltransferase B</fullName>
        <ecNumber evidence="1">2.1.1.176</ecNumber>
    </recommendedName>
    <alternativeName>
        <fullName evidence="1">16S rRNA m5C967 methyltransferase</fullName>
    </alternativeName>
    <alternativeName>
        <fullName evidence="1">rRNA (cytosine-C(5)-)-methyltransferase RsmB</fullName>
    </alternativeName>
</protein>
<organism>
    <name type="scientific">Coxiella burnetii (strain RSA 493 / Nine Mile phase I)</name>
    <dbReference type="NCBI Taxonomy" id="227377"/>
    <lineage>
        <taxon>Bacteria</taxon>
        <taxon>Pseudomonadati</taxon>
        <taxon>Pseudomonadota</taxon>
        <taxon>Gammaproteobacteria</taxon>
        <taxon>Legionellales</taxon>
        <taxon>Coxiellaceae</taxon>
        <taxon>Coxiella</taxon>
    </lineage>
</organism>
<name>RSMB_COXBU</name>